<feature type="chain" id="PRO_1000018745" description="Phosphoribosylaminoimidazole-succinocarboxamide synthase">
    <location>
        <begin position="1"/>
        <end position="254"/>
    </location>
</feature>
<dbReference type="EC" id="6.3.2.6" evidence="1"/>
<dbReference type="EMBL" id="CP000758">
    <property type="protein sequence ID" value="ABS15096.1"/>
    <property type="molecule type" value="Genomic_DNA"/>
</dbReference>
<dbReference type="RefSeq" id="WP_010661209.1">
    <property type="nucleotide sequence ID" value="NC_009667.1"/>
</dbReference>
<dbReference type="SMR" id="A6X1J2"/>
<dbReference type="STRING" id="439375.Oant_2382"/>
<dbReference type="GeneID" id="61317166"/>
<dbReference type="KEGG" id="oan:Oant_2382"/>
<dbReference type="eggNOG" id="COG0152">
    <property type="taxonomic scope" value="Bacteria"/>
</dbReference>
<dbReference type="HOGENOM" id="CLU_061495_2_0_5"/>
<dbReference type="PhylomeDB" id="A6X1J2"/>
<dbReference type="UniPathway" id="UPA00074">
    <property type="reaction ID" value="UER00131"/>
</dbReference>
<dbReference type="Proteomes" id="UP000002301">
    <property type="component" value="Chromosome 1"/>
</dbReference>
<dbReference type="GO" id="GO:0005829">
    <property type="term" value="C:cytosol"/>
    <property type="evidence" value="ECO:0007669"/>
    <property type="project" value="TreeGrafter"/>
</dbReference>
<dbReference type="GO" id="GO:0005524">
    <property type="term" value="F:ATP binding"/>
    <property type="evidence" value="ECO:0007669"/>
    <property type="project" value="UniProtKB-KW"/>
</dbReference>
<dbReference type="GO" id="GO:0004639">
    <property type="term" value="F:phosphoribosylaminoimidazolesuccinocarboxamide synthase activity"/>
    <property type="evidence" value="ECO:0007669"/>
    <property type="project" value="UniProtKB-UniRule"/>
</dbReference>
<dbReference type="GO" id="GO:0006189">
    <property type="term" value="P:'de novo' IMP biosynthetic process"/>
    <property type="evidence" value="ECO:0007669"/>
    <property type="project" value="UniProtKB-UniRule"/>
</dbReference>
<dbReference type="GO" id="GO:0009236">
    <property type="term" value="P:cobalamin biosynthetic process"/>
    <property type="evidence" value="ECO:0007669"/>
    <property type="project" value="InterPro"/>
</dbReference>
<dbReference type="CDD" id="cd01415">
    <property type="entry name" value="SAICAR_synt_PurC"/>
    <property type="match status" value="1"/>
</dbReference>
<dbReference type="FunFam" id="3.30.470.20:FF:000006">
    <property type="entry name" value="Phosphoribosylaminoimidazole-succinocarboxamide synthase"/>
    <property type="match status" value="1"/>
</dbReference>
<dbReference type="Gene3D" id="3.30.470.20">
    <property type="entry name" value="ATP-grasp fold, B domain"/>
    <property type="match status" value="1"/>
</dbReference>
<dbReference type="Gene3D" id="3.30.200.20">
    <property type="entry name" value="Phosphorylase Kinase, domain 1"/>
    <property type="match status" value="1"/>
</dbReference>
<dbReference type="HAMAP" id="MF_00137">
    <property type="entry name" value="SAICAR_synth"/>
    <property type="match status" value="1"/>
</dbReference>
<dbReference type="InterPro" id="IPR028923">
    <property type="entry name" value="SAICAR_synt/ADE2_N"/>
</dbReference>
<dbReference type="InterPro" id="IPR033934">
    <property type="entry name" value="SAICAR_synt_PurC"/>
</dbReference>
<dbReference type="InterPro" id="IPR001636">
    <property type="entry name" value="SAICAR_synth"/>
</dbReference>
<dbReference type="InterPro" id="IPR050089">
    <property type="entry name" value="SAICAR_synthetase"/>
</dbReference>
<dbReference type="InterPro" id="IPR018236">
    <property type="entry name" value="SAICAR_synthetase_CS"/>
</dbReference>
<dbReference type="NCBIfam" id="TIGR00081">
    <property type="entry name" value="purC"/>
    <property type="match status" value="1"/>
</dbReference>
<dbReference type="PANTHER" id="PTHR43599">
    <property type="entry name" value="MULTIFUNCTIONAL PROTEIN ADE2"/>
    <property type="match status" value="1"/>
</dbReference>
<dbReference type="PANTHER" id="PTHR43599:SF3">
    <property type="entry name" value="SI:DKEY-6E2.2"/>
    <property type="match status" value="1"/>
</dbReference>
<dbReference type="Pfam" id="PF01259">
    <property type="entry name" value="SAICAR_synt"/>
    <property type="match status" value="1"/>
</dbReference>
<dbReference type="SUPFAM" id="SSF56104">
    <property type="entry name" value="SAICAR synthase-like"/>
    <property type="match status" value="1"/>
</dbReference>
<dbReference type="PROSITE" id="PS01057">
    <property type="entry name" value="SAICAR_SYNTHETASE_1"/>
    <property type="match status" value="1"/>
</dbReference>
<name>PUR7_BRUA4</name>
<proteinExistence type="inferred from homology"/>
<reference key="1">
    <citation type="journal article" date="2011" name="J. Bacteriol.">
        <title>Genome of Ochrobactrum anthropi ATCC 49188 T, a versatile opportunistic pathogen and symbiont of several eukaryotic hosts.</title>
        <authorList>
            <person name="Chain P.S."/>
            <person name="Lang D.M."/>
            <person name="Comerci D.J."/>
            <person name="Malfatti S.A."/>
            <person name="Vergez L.M."/>
            <person name="Shin M."/>
            <person name="Ugalde R.A."/>
            <person name="Garcia E."/>
            <person name="Tolmasky M.E."/>
        </authorList>
    </citation>
    <scope>NUCLEOTIDE SEQUENCE [LARGE SCALE GENOMIC DNA]</scope>
    <source>
        <strain>ATCC 49188 / DSM 6882 / CCUG 24695 / JCM 21032 / LMG 3331 / NBRC 15819 / NCTC 12168 / Alc 37</strain>
    </source>
</reference>
<accession>A6X1J2</accession>
<protein>
    <recommendedName>
        <fullName evidence="1">Phosphoribosylaminoimidazole-succinocarboxamide synthase</fullName>
        <ecNumber evidence="1">6.3.2.6</ecNumber>
    </recommendedName>
    <alternativeName>
        <fullName evidence="1">SAICAR synthetase</fullName>
    </alternativeName>
</protein>
<keyword id="KW-0067">ATP-binding</keyword>
<keyword id="KW-0436">Ligase</keyword>
<keyword id="KW-0547">Nucleotide-binding</keyword>
<keyword id="KW-0658">Purine biosynthesis</keyword>
<keyword id="KW-1185">Reference proteome</keyword>
<gene>
    <name evidence="1" type="primary">purC</name>
    <name type="ordered locus">Oant_2382</name>
</gene>
<evidence type="ECO:0000255" key="1">
    <source>
        <dbReference type="HAMAP-Rule" id="MF_00137"/>
    </source>
</evidence>
<organism>
    <name type="scientific">Brucella anthropi (strain ATCC 49188 / DSM 6882 / CCUG 24695 / JCM 21032 / LMG 3331 / NBRC 15819 / NCTC 12168 / Alc 37)</name>
    <name type="common">Ochrobactrum anthropi</name>
    <dbReference type="NCBI Taxonomy" id="439375"/>
    <lineage>
        <taxon>Bacteria</taxon>
        <taxon>Pseudomonadati</taxon>
        <taxon>Pseudomonadota</taxon>
        <taxon>Alphaproteobacteria</taxon>
        <taxon>Hyphomicrobiales</taxon>
        <taxon>Brucellaceae</taxon>
        <taxon>Brucella/Ochrobactrum group</taxon>
        <taxon>Brucella</taxon>
    </lineage>
</organism>
<sequence length="254" mass="28895">MNRRRRIYEGKAKILYEGPEPGTLVQFFKDDATAFNAKKHEVIDGKGVLNNRISEHIFTQLNRIGIPTHFIRRLNMREQLIKEVEIIPLEVVVRNVAAGSLAKRLGLEEGTVLPRSIIEFYYKADALDDPMVTEEHITAFGWASPPEIDDIMALAIRVNDFLTGLFLGIGIQLVDFKMECGRLWEGDMMRIVVADEISPDSARLWDITTNDKLDKDRFRRDMGGLVEAYQEVARRLGIMNENDTPRPAGPTLVK</sequence>
<comment type="catalytic activity">
    <reaction evidence="1">
        <text>5-amino-1-(5-phospho-D-ribosyl)imidazole-4-carboxylate + L-aspartate + ATP = (2S)-2-[5-amino-1-(5-phospho-beta-D-ribosyl)imidazole-4-carboxamido]succinate + ADP + phosphate + 2 H(+)</text>
        <dbReference type="Rhea" id="RHEA:22628"/>
        <dbReference type="ChEBI" id="CHEBI:15378"/>
        <dbReference type="ChEBI" id="CHEBI:29991"/>
        <dbReference type="ChEBI" id="CHEBI:30616"/>
        <dbReference type="ChEBI" id="CHEBI:43474"/>
        <dbReference type="ChEBI" id="CHEBI:58443"/>
        <dbReference type="ChEBI" id="CHEBI:77657"/>
        <dbReference type="ChEBI" id="CHEBI:456216"/>
        <dbReference type="EC" id="6.3.2.6"/>
    </reaction>
</comment>
<comment type="pathway">
    <text evidence="1">Purine metabolism; IMP biosynthesis via de novo pathway; 5-amino-1-(5-phospho-D-ribosyl)imidazole-4-carboxamide from 5-amino-1-(5-phospho-D-ribosyl)imidazole-4-carboxylate: step 1/2.</text>
</comment>
<comment type="similarity">
    <text evidence="1">Belongs to the SAICAR synthetase family.</text>
</comment>